<evidence type="ECO:0000255" key="1">
    <source>
        <dbReference type="HAMAP-Rule" id="MF_00651"/>
    </source>
</evidence>
<feature type="chain" id="PRO_0000257591" description="Putative pre-16S rRNA nuclease">
    <location>
        <begin position="1"/>
        <end position="157"/>
    </location>
</feature>
<organism>
    <name type="scientific">Ruegeria sp. (strain TM1040)</name>
    <name type="common">Silicibacter sp.</name>
    <dbReference type="NCBI Taxonomy" id="292414"/>
    <lineage>
        <taxon>Bacteria</taxon>
        <taxon>Pseudomonadati</taxon>
        <taxon>Pseudomonadota</taxon>
        <taxon>Alphaproteobacteria</taxon>
        <taxon>Rhodobacterales</taxon>
        <taxon>Roseobacteraceae</taxon>
        <taxon>Ruegeria</taxon>
    </lineage>
</organism>
<proteinExistence type="inferred from homology"/>
<comment type="function">
    <text evidence="1">Could be a nuclease involved in processing of the 5'-end of pre-16S rRNA.</text>
</comment>
<comment type="subcellular location">
    <subcellularLocation>
        <location evidence="1">Cytoplasm</location>
    </subcellularLocation>
</comment>
<comment type="similarity">
    <text evidence="1">Belongs to the YqgF nuclease family.</text>
</comment>
<dbReference type="EC" id="3.1.-.-" evidence="1"/>
<dbReference type="EMBL" id="CP000377">
    <property type="protein sequence ID" value="ABF63700.1"/>
    <property type="molecule type" value="Genomic_DNA"/>
</dbReference>
<dbReference type="RefSeq" id="WP_011538310.1">
    <property type="nucleotide sequence ID" value="NC_008044.1"/>
</dbReference>
<dbReference type="SMR" id="Q1GI16"/>
<dbReference type="STRING" id="292414.TM1040_0967"/>
<dbReference type="KEGG" id="sit:TM1040_0967"/>
<dbReference type="eggNOG" id="COG0816">
    <property type="taxonomic scope" value="Bacteria"/>
</dbReference>
<dbReference type="HOGENOM" id="CLU_098240_1_1_5"/>
<dbReference type="OrthoDB" id="9796140at2"/>
<dbReference type="Proteomes" id="UP000000636">
    <property type="component" value="Chromosome"/>
</dbReference>
<dbReference type="GO" id="GO:0005829">
    <property type="term" value="C:cytosol"/>
    <property type="evidence" value="ECO:0007669"/>
    <property type="project" value="TreeGrafter"/>
</dbReference>
<dbReference type="GO" id="GO:0004518">
    <property type="term" value="F:nuclease activity"/>
    <property type="evidence" value="ECO:0007669"/>
    <property type="project" value="UniProtKB-KW"/>
</dbReference>
<dbReference type="GO" id="GO:0000967">
    <property type="term" value="P:rRNA 5'-end processing"/>
    <property type="evidence" value="ECO:0007669"/>
    <property type="project" value="UniProtKB-UniRule"/>
</dbReference>
<dbReference type="CDD" id="cd16964">
    <property type="entry name" value="YqgF"/>
    <property type="match status" value="1"/>
</dbReference>
<dbReference type="Gene3D" id="3.30.420.140">
    <property type="entry name" value="YqgF/RNase H-like domain"/>
    <property type="match status" value="1"/>
</dbReference>
<dbReference type="HAMAP" id="MF_00651">
    <property type="entry name" value="Nuclease_YqgF"/>
    <property type="match status" value="1"/>
</dbReference>
<dbReference type="InterPro" id="IPR012337">
    <property type="entry name" value="RNaseH-like_sf"/>
</dbReference>
<dbReference type="InterPro" id="IPR005227">
    <property type="entry name" value="YqgF"/>
</dbReference>
<dbReference type="InterPro" id="IPR006641">
    <property type="entry name" value="YqgF/RNaseH-like_dom"/>
</dbReference>
<dbReference type="InterPro" id="IPR037027">
    <property type="entry name" value="YqgF/RNaseH-like_dom_sf"/>
</dbReference>
<dbReference type="NCBIfam" id="TIGR00250">
    <property type="entry name" value="RNAse_H_YqgF"/>
    <property type="match status" value="1"/>
</dbReference>
<dbReference type="PANTHER" id="PTHR33317">
    <property type="entry name" value="POLYNUCLEOTIDYL TRANSFERASE, RIBONUCLEASE H-LIKE SUPERFAMILY PROTEIN"/>
    <property type="match status" value="1"/>
</dbReference>
<dbReference type="PANTHER" id="PTHR33317:SF4">
    <property type="entry name" value="POLYNUCLEOTIDYL TRANSFERASE, RIBONUCLEASE H-LIKE SUPERFAMILY PROTEIN"/>
    <property type="match status" value="1"/>
</dbReference>
<dbReference type="Pfam" id="PF03652">
    <property type="entry name" value="RuvX"/>
    <property type="match status" value="1"/>
</dbReference>
<dbReference type="SMART" id="SM00732">
    <property type="entry name" value="YqgFc"/>
    <property type="match status" value="1"/>
</dbReference>
<dbReference type="SUPFAM" id="SSF53098">
    <property type="entry name" value="Ribonuclease H-like"/>
    <property type="match status" value="1"/>
</dbReference>
<accession>Q1GI16</accession>
<name>YQGF_RUEST</name>
<gene>
    <name type="ordered locus">TM1040_0967</name>
</gene>
<protein>
    <recommendedName>
        <fullName evidence="1">Putative pre-16S rRNA nuclease</fullName>
        <ecNumber evidence="1">3.1.-.-</ecNumber>
    </recommendedName>
</protein>
<reference key="1">
    <citation type="submission" date="2006-05" db="EMBL/GenBank/DDBJ databases">
        <title>Complete sequence of chromosome of Silicibacter sp. TM1040.</title>
        <authorList>
            <consortium name="US DOE Joint Genome Institute"/>
            <person name="Copeland A."/>
            <person name="Lucas S."/>
            <person name="Lapidus A."/>
            <person name="Barry K."/>
            <person name="Detter J.C."/>
            <person name="Glavina del Rio T."/>
            <person name="Hammon N."/>
            <person name="Israni S."/>
            <person name="Dalin E."/>
            <person name="Tice H."/>
            <person name="Pitluck S."/>
            <person name="Brettin T."/>
            <person name="Bruce D."/>
            <person name="Han C."/>
            <person name="Tapia R."/>
            <person name="Goodwin L."/>
            <person name="Thompson L.S."/>
            <person name="Gilna P."/>
            <person name="Schmutz J."/>
            <person name="Larimer F."/>
            <person name="Land M."/>
            <person name="Hauser L."/>
            <person name="Kyrpides N."/>
            <person name="Kim E."/>
            <person name="Belas R."/>
            <person name="Moran M.A."/>
            <person name="Buchan A."/>
            <person name="Gonzalez J.M."/>
            <person name="Schell M.A."/>
            <person name="Sun F."/>
            <person name="Richardson P."/>
        </authorList>
    </citation>
    <scope>NUCLEOTIDE SEQUENCE [LARGE SCALE GENOMIC DNA]</scope>
    <source>
        <strain>TM1040</strain>
    </source>
</reference>
<sequence>MIHDAFEDFAAALPQMTALVGLDFGEKTIGVAVSDRIGAVATPLETIRRKKFTLDSNRLLEIIAGRDINGILLGLPRNMDGSEGPRCQSTRAFARNLSRVTDLPIGFWDERLSTVAAERALLEADTSRKRRAEVIDHVAASYILQGALDRMRHIRSS</sequence>
<keyword id="KW-0963">Cytoplasm</keyword>
<keyword id="KW-0378">Hydrolase</keyword>
<keyword id="KW-0540">Nuclease</keyword>
<keyword id="KW-1185">Reference proteome</keyword>
<keyword id="KW-0690">Ribosome biogenesis</keyword>